<protein>
    <recommendedName>
        <fullName>N-alpha-acetyltransferase 30</fullName>
        <ecNumber>2.3.1.-</ecNumber>
    </recommendedName>
    <alternativeName>
        <fullName>N-acetyltransferase MAK3 homolog</fullName>
    </alternativeName>
    <alternativeName>
        <fullName>NatC catalytic subunit</fullName>
    </alternativeName>
</protein>
<organism>
    <name type="scientific">Dictyostelium discoideum</name>
    <name type="common">Social amoeba</name>
    <dbReference type="NCBI Taxonomy" id="44689"/>
    <lineage>
        <taxon>Eukaryota</taxon>
        <taxon>Amoebozoa</taxon>
        <taxon>Evosea</taxon>
        <taxon>Eumycetozoa</taxon>
        <taxon>Dictyostelia</taxon>
        <taxon>Dictyosteliales</taxon>
        <taxon>Dictyosteliaceae</taxon>
        <taxon>Dictyostelium</taxon>
    </lineage>
</organism>
<keyword id="KW-0012">Acyltransferase</keyword>
<keyword id="KW-1185">Reference proteome</keyword>
<keyword id="KW-0808">Transferase</keyword>
<gene>
    <name type="ORF">DDB_G0285803</name>
</gene>
<accession>Q54MP9</accession>
<dbReference type="EC" id="2.3.1.-"/>
<dbReference type="EMBL" id="AAFI02000080">
    <property type="protein sequence ID" value="EAL64523.1"/>
    <property type="molecule type" value="Genomic_DNA"/>
</dbReference>
<dbReference type="RefSeq" id="XP_638028.1">
    <property type="nucleotide sequence ID" value="XM_632936.1"/>
</dbReference>
<dbReference type="SMR" id="Q54MP9"/>
<dbReference type="FunCoup" id="Q54MP9">
    <property type="interactions" value="6"/>
</dbReference>
<dbReference type="STRING" id="44689.Q54MP9"/>
<dbReference type="PaxDb" id="44689-DDB0186690"/>
<dbReference type="EnsemblProtists" id="EAL64523">
    <property type="protein sequence ID" value="EAL64523"/>
    <property type="gene ID" value="DDB_G0285803"/>
</dbReference>
<dbReference type="GeneID" id="8625293"/>
<dbReference type="KEGG" id="ddi:DDB_G0285803"/>
<dbReference type="dictyBase" id="DDB_G0285803"/>
<dbReference type="VEuPathDB" id="AmoebaDB:DDB_G0285803"/>
<dbReference type="eggNOG" id="KOG3139">
    <property type="taxonomic scope" value="Eukaryota"/>
</dbReference>
<dbReference type="HOGENOM" id="CLU_013985_0_3_1"/>
<dbReference type="InParanoid" id="Q54MP9"/>
<dbReference type="OMA" id="EDIQYTN"/>
<dbReference type="PhylomeDB" id="Q54MP9"/>
<dbReference type="PRO" id="PR:Q54MP9"/>
<dbReference type="Proteomes" id="UP000002195">
    <property type="component" value="Chromosome 4"/>
</dbReference>
<dbReference type="GO" id="GO:0031417">
    <property type="term" value="C:NatC complex"/>
    <property type="evidence" value="ECO:0000318"/>
    <property type="project" value="GO_Central"/>
</dbReference>
<dbReference type="GO" id="GO:0004596">
    <property type="term" value="F:protein-N-terminal amino-acid acetyltransferase activity"/>
    <property type="evidence" value="ECO:0000318"/>
    <property type="project" value="GO_Central"/>
</dbReference>
<dbReference type="CDD" id="cd04301">
    <property type="entry name" value="NAT_SF"/>
    <property type="match status" value="1"/>
</dbReference>
<dbReference type="FunFam" id="3.40.630.30:FF:000199">
    <property type="entry name" value="N-acetyltransferase catalytic subunit, putative"/>
    <property type="match status" value="1"/>
</dbReference>
<dbReference type="Gene3D" id="3.40.630.30">
    <property type="match status" value="1"/>
</dbReference>
<dbReference type="InterPro" id="IPR016181">
    <property type="entry name" value="Acyl_CoA_acyltransferase"/>
</dbReference>
<dbReference type="InterPro" id="IPR000182">
    <property type="entry name" value="GNAT_dom"/>
</dbReference>
<dbReference type="InterPro" id="IPR044542">
    <property type="entry name" value="NAA30-like"/>
</dbReference>
<dbReference type="PANTHER" id="PTHR45896">
    <property type="entry name" value="N-ALPHA-ACETYLTRANSFERASE 30"/>
    <property type="match status" value="1"/>
</dbReference>
<dbReference type="PANTHER" id="PTHR45896:SF1">
    <property type="entry name" value="N-ALPHA-ACETYLTRANSFERASE 30"/>
    <property type="match status" value="1"/>
</dbReference>
<dbReference type="Pfam" id="PF00583">
    <property type="entry name" value="Acetyltransf_1"/>
    <property type="match status" value="1"/>
</dbReference>
<dbReference type="SUPFAM" id="SSF55729">
    <property type="entry name" value="Acyl-CoA N-acyltransferases (Nat)"/>
    <property type="match status" value="1"/>
</dbReference>
<dbReference type="PROSITE" id="PS51186">
    <property type="entry name" value="GNAT"/>
    <property type="match status" value="1"/>
</dbReference>
<reference key="1">
    <citation type="journal article" date="2005" name="Nature">
        <title>The genome of the social amoeba Dictyostelium discoideum.</title>
        <authorList>
            <person name="Eichinger L."/>
            <person name="Pachebat J.A."/>
            <person name="Gloeckner G."/>
            <person name="Rajandream M.A."/>
            <person name="Sucgang R."/>
            <person name="Berriman M."/>
            <person name="Song J."/>
            <person name="Olsen R."/>
            <person name="Szafranski K."/>
            <person name="Xu Q."/>
            <person name="Tunggal B."/>
            <person name="Kummerfeld S."/>
            <person name="Madera M."/>
            <person name="Konfortov B.A."/>
            <person name="Rivero F."/>
            <person name="Bankier A.T."/>
            <person name="Lehmann R."/>
            <person name="Hamlin N."/>
            <person name="Davies R."/>
            <person name="Gaudet P."/>
            <person name="Fey P."/>
            <person name="Pilcher K."/>
            <person name="Chen G."/>
            <person name="Saunders D."/>
            <person name="Sodergren E.J."/>
            <person name="Davis P."/>
            <person name="Kerhornou A."/>
            <person name="Nie X."/>
            <person name="Hall N."/>
            <person name="Anjard C."/>
            <person name="Hemphill L."/>
            <person name="Bason N."/>
            <person name="Farbrother P."/>
            <person name="Desany B."/>
            <person name="Just E."/>
            <person name="Morio T."/>
            <person name="Rost R."/>
            <person name="Churcher C.M."/>
            <person name="Cooper J."/>
            <person name="Haydock S."/>
            <person name="van Driessche N."/>
            <person name="Cronin A."/>
            <person name="Goodhead I."/>
            <person name="Muzny D.M."/>
            <person name="Mourier T."/>
            <person name="Pain A."/>
            <person name="Lu M."/>
            <person name="Harper D."/>
            <person name="Lindsay R."/>
            <person name="Hauser H."/>
            <person name="James K.D."/>
            <person name="Quiles M."/>
            <person name="Madan Babu M."/>
            <person name="Saito T."/>
            <person name="Buchrieser C."/>
            <person name="Wardroper A."/>
            <person name="Felder M."/>
            <person name="Thangavelu M."/>
            <person name="Johnson D."/>
            <person name="Knights A."/>
            <person name="Loulseged H."/>
            <person name="Mungall K.L."/>
            <person name="Oliver K."/>
            <person name="Price C."/>
            <person name="Quail M.A."/>
            <person name="Urushihara H."/>
            <person name="Hernandez J."/>
            <person name="Rabbinowitsch E."/>
            <person name="Steffen D."/>
            <person name="Sanders M."/>
            <person name="Ma J."/>
            <person name="Kohara Y."/>
            <person name="Sharp S."/>
            <person name="Simmonds M.N."/>
            <person name="Spiegler S."/>
            <person name="Tivey A."/>
            <person name="Sugano S."/>
            <person name="White B."/>
            <person name="Walker D."/>
            <person name="Woodward J.R."/>
            <person name="Winckler T."/>
            <person name="Tanaka Y."/>
            <person name="Shaulsky G."/>
            <person name="Schleicher M."/>
            <person name="Weinstock G.M."/>
            <person name="Rosenthal A."/>
            <person name="Cox E.C."/>
            <person name="Chisholm R.L."/>
            <person name="Gibbs R.A."/>
            <person name="Loomis W.F."/>
            <person name="Platzer M."/>
            <person name="Kay R.R."/>
            <person name="Williams J.G."/>
            <person name="Dear P.H."/>
            <person name="Noegel A.A."/>
            <person name="Barrell B.G."/>
            <person name="Kuspa A."/>
        </authorList>
    </citation>
    <scope>NUCLEOTIDE SEQUENCE [LARGE SCALE GENOMIC DNA]</scope>
    <source>
        <strain>AX4</strain>
    </source>
</reference>
<comment type="function">
    <text evidence="1">Probable catalytic component of a complex displaying alpha (N-terminal) acetyltransferase activity.</text>
</comment>
<comment type="similarity">
    <text evidence="3">Belongs to the acetyltransferase family. MAK3 subfamily.</text>
</comment>
<proteinExistence type="inferred from homology"/>
<evidence type="ECO:0000250" key="1"/>
<evidence type="ECO:0000255" key="2">
    <source>
        <dbReference type="PROSITE-ProRule" id="PRU00532"/>
    </source>
</evidence>
<evidence type="ECO:0000305" key="3"/>
<name>NAA30_DICDI</name>
<sequence length="185" mass="21614">MSNTTTTATTTNINENKVREIYKAPMKIGEIEYIPYQGESQIQDLMSLIEKELPEPYSIFTYRFFLNQWPELCFLAYCNGQLIGVIISKKQTHKLLERGYIGMIVVDKTFRRQKIGSTLIKLTIEKMIEMKCDEVVLETIFTNIQAISLYENLGFTRIKRLFRYYTMGADAVRLLLPLNDKFLIK</sequence>
<feature type="chain" id="PRO_0000320036" description="N-alpha-acetyltransferase 30">
    <location>
        <begin position="1"/>
        <end position="185"/>
    </location>
</feature>
<feature type="domain" description="N-acetyltransferase" evidence="2">
    <location>
        <begin position="31"/>
        <end position="179"/>
    </location>
</feature>